<gene>
    <name evidence="1" type="primary">dnaA1</name>
    <name type="ordered locus">pc0307</name>
</gene>
<evidence type="ECO:0000255" key="1">
    <source>
        <dbReference type="HAMAP-Rule" id="MF_00377"/>
    </source>
</evidence>
<protein>
    <recommendedName>
        <fullName evidence="1">Chromosomal replication initiator protein DnaA 1</fullName>
    </recommendedName>
</protein>
<reference key="1">
    <citation type="journal article" date="2004" name="Science">
        <title>Illuminating the evolutionary history of chlamydiae.</title>
        <authorList>
            <person name="Horn M."/>
            <person name="Collingro A."/>
            <person name="Schmitz-Esser S."/>
            <person name="Beier C.L."/>
            <person name="Purkhold U."/>
            <person name="Fartmann B."/>
            <person name="Brandt P."/>
            <person name="Nyakatura G.J."/>
            <person name="Droege M."/>
            <person name="Frishman D."/>
            <person name="Rattei T."/>
            <person name="Mewes H.-W."/>
            <person name="Wagner M."/>
        </authorList>
    </citation>
    <scope>NUCLEOTIDE SEQUENCE [LARGE SCALE GENOMIC DNA]</scope>
    <source>
        <strain>UWE25</strain>
    </source>
</reference>
<feature type="chain" id="PRO_0000114227" description="Chromosomal replication initiator protein DnaA 1">
    <location>
        <begin position="1"/>
        <end position="448"/>
    </location>
</feature>
<feature type="region of interest" description="Domain I, interacts with DnaA modulators" evidence="1">
    <location>
        <begin position="1"/>
        <end position="76"/>
    </location>
</feature>
<feature type="region of interest" description="Domain II" evidence="1">
    <location>
        <begin position="76"/>
        <end position="111"/>
    </location>
</feature>
<feature type="region of interest" description="Domain III, AAA+ region" evidence="1">
    <location>
        <begin position="112"/>
        <end position="328"/>
    </location>
</feature>
<feature type="region of interest" description="Domain IV, binds dsDNA" evidence="1">
    <location>
        <begin position="329"/>
        <end position="448"/>
    </location>
</feature>
<feature type="binding site" evidence="1">
    <location>
        <position position="156"/>
    </location>
    <ligand>
        <name>ATP</name>
        <dbReference type="ChEBI" id="CHEBI:30616"/>
    </ligand>
</feature>
<feature type="binding site" evidence="1">
    <location>
        <position position="158"/>
    </location>
    <ligand>
        <name>ATP</name>
        <dbReference type="ChEBI" id="CHEBI:30616"/>
    </ligand>
</feature>
<feature type="binding site" evidence="1">
    <location>
        <position position="159"/>
    </location>
    <ligand>
        <name>ATP</name>
        <dbReference type="ChEBI" id="CHEBI:30616"/>
    </ligand>
</feature>
<feature type="binding site" evidence="1">
    <location>
        <position position="160"/>
    </location>
    <ligand>
        <name>ATP</name>
        <dbReference type="ChEBI" id="CHEBI:30616"/>
    </ligand>
</feature>
<comment type="function">
    <text evidence="1">Plays an essential role in the initiation and regulation of chromosomal replication. ATP-DnaA binds to the origin of replication (oriC) to initiate formation of the DNA replication initiation complex once per cell cycle. Binds the DnaA box (a 9 base pair repeat at the origin) and separates the double-stranded (ds)DNA. Forms a right-handed helical filament on oriC DNA; dsDNA binds to the exterior of the filament while single-stranded (ss)DNA is stabiized in the filament's interior. The ATP-DnaA-oriC complex binds and stabilizes one strand of the AT-rich DNA unwinding element (DUE), permitting loading of DNA polymerase. After initiation quickly degrades to an ADP-DnaA complex that is not apt for DNA replication. Binds acidic phospholipids.</text>
</comment>
<comment type="subunit">
    <text evidence="1">Oligomerizes as a right-handed, spiral filament on DNA at oriC.</text>
</comment>
<comment type="subcellular location">
    <subcellularLocation>
        <location evidence="1">Cytoplasm</location>
    </subcellularLocation>
</comment>
<comment type="domain">
    <text evidence="1">Domain I is involved in oligomerization and binding regulators, domain II is flexibile and of varying length in different bacteria, domain III forms the AAA+ region, while domain IV binds dsDNA.</text>
</comment>
<comment type="similarity">
    <text evidence="1">Belongs to the DnaA family.</text>
</comment>
<sequence>MLTSETQNVWTQFLQFVKTRCSPAAFGNWLAPIRVIDCSTEEVTLEIPNIFVQEYLLSNYKKDLCAFLPVDMSGEPAIRFIIAPPQKKIIPPNHFSISSSQKEEQSPNSDVKLNNNYRFENFIEGPTNQFVKSAAMGVALRPGQSYNPLFIHGGVGLGKTHILHSIGHYIKENHKKLRVQCITTEAFINDLVDSLRNKSVDRMKKFYRSEIDVLLVDDIQFLQNRLNFEEELSYTFEALKNKGAQIVITSDKPPSLLKLSERTIGKMEGGLVAHMGIPELETRVAILQYKAEQKGLHIPHKVAFFIAEHIHNNVRQLEGAINRLSAHCRLLDLNITEELVSRTLREMLQQAPREKISVEQILKSVAAVFQVRVSDLRGSTRTKDIALPRQVAMYLAKEMINESLIMLGASFGKTHSTILHACKNIEKKVASDETLRRQIGMVRRNIES</sequence>
<accession>Q6MEG8</accession>
<organism>
    <name type="scientific">Protochlamydia amoebophila (strain UWE25)</name>
    <dbReference type="NCBI Taxonomy" id="264201"/>
    <lineage>
        <taxon>Bacteria</taxon>
        <taxon>Pseudomonadati</taxon>
        <taxon>Chlamydiota</taxon>
        <taxon>Chlamydiia</taxon>
        <taxon>Parachlamydiales</taxon>
        <taxon>Parachlamydiaceae</taxon>
        <taxon>Candidatus Protochlamydia</taxon>
    </lineage>
</organism>
<dbReference type="EMBL" id="BX908798">
    <property type="protein sequence ID" value="CAF23031.1"/>
    <property type="molecule type" value="Genomic_DNA"/>
</dbReference>
<dbReference type="RefSeq" id="WP_044044722.1">
    <property type="nucleotide sequence ID" value="NC_005861.2"/>
</dbReference>
<dbReference type="SMR" id="Q6MEG8"/>
<dbReference type="STRING" id="264201.pc0307"/>
<dbReference type="eggNOG" id="COG0593">
    <property type="taxonomic scope" value="Bacteria"/>
</dbReference>
<dbReference type="HOGENOM" id="CLU_026910_3_2_0"/>
<dbReference type="OrthoDB" id="9807019at2"/>
<dbReference type="Proteomes" id="UP000000529">
    <property type="component" value="Chromosome"/>
</dbReference>
<dbReference type="GO" id="GO:0005737">
    <property type="term" value="C:cytoplasm"/>
    <property type="evidence" value="ECO:0007669"/>
    <property type="project" value="UniProtKB-SubCell"/>
</dbReference>
<dbReference type="GO" id="GO:0005886">
    <property type="term" value="C:plasma membrane"/>
    <property type="evidence" value="ECO:0007669"/>
    <property type="project" value="TreeGrafter"/>
</dbReference>
<dbReference type="GO" id="GO:0005524">
    <property type="term" value="F:ATP binding"/>
    <property type="evidence" value="ECO:0007669"/>
    <property type="project" value="UniProtKB-UniRule"/>
</dbReference>
<dbReference type="GO" id="GO:0016887">
    <property type="term" value="F:ATP hydrolysis activity"/>
    <property type="evidence" value="ECO:0007669"/>
    <property type="project" value="InterPro"/>
</dbReference>
<dbReference type="GO" id="GO:0003688">
    <property type="term" value="F:DNA replication origin binding"/>
    <property type="evidence" value="ECO:0007669"/>
    <property type="project" value="UniProtKB-UniRule"/>
</dbReference>
<dbReference type="GO" id="GO:0008289">
    <property type="term" value="F:lipid binding"/>
    <property type="evidence" value="ECO:0007669"/>
    <property type="project" value="UniProtKB-KW"/>
</dbReference>
<dbReference type="GO" id="GO:0006270">
    <property type="term" value="P:DNA replication initiation"/>
    <property type="evidence" value="ECO:0007669"/>
    <property type="project" value="UniProtKB-UniRule"/>
</dbReference>
<dbReference type="GO" id="GO:0006275">
    <property type="term" value="P:regulation of DNA replication"/>
    <property type="evidence" value="ECO:0007669"/>
    <property type="project" value="UniProtKB-UniRule"/>
</dbReference>
<dbReference type="CDD" id="cd00009">
    <property type="entry name" value="AAA"/>
    <property type="match status" value="1"/>
</dbReference>
<dbReference type="CDD" id="cd06571">
    <property type="entry name" value="Bac_DnaA_C"/>
    <property type="match status" value="1"/>
</dbReference>
<dbReference type="FunFam" id="1.10.8.60:FF:000003">
    <property type="entry name" value="Chromosomal replication initiator protein DnaA"/>
    <property type="match status" value="1"/>
</dbReference>
<dbReference type="Gene3D" id="1.10.1750.10">
    <property type="match status" value="1"/>
</dbReference>
<dbReference type="Gene3D" id="1.10.8.60">
    <property type="match status" value="1"/>
</dbReference>
<dbReference type="Gene3D" id="3.30.300.180">
    <property type="match status" value="1"/>
</dbReference>
<dbReference type="Gene3D" id="3.40.50.300">
    <property type="entry name" value="P-loop containing nucleotide triphosphate hydrolases"/>
    <property type="match status" value="1"/>
</dbReference>
<dbReference type="HAMAP" id="MF_00377">
    <property type="entry name" value="DnaA_bact"/>
    <property type="match status" value="1"/>
</dbReference>
<dbReference type="InterPro" id="IPR003593">
    <property type="entry name" value="AAA+_ATPase"/>
</dbReference>
<dbReference type="InterPro" id="IPR001957">
    <property type="entry name" value="Chromosome_initiator_DnaA"/>
</dbReference>
<dbReference type="InterPro" id="IPR020591">
    <property type="entry name" value="Chromosome_initiator_DnaA-like"/>
</dbReference>
<dbReference type="InterPro" id="IPR018312">
    <property type="entry name" value="Chromosome_initiator_DnaA_CS"/>
</dbReference>
<dbReference type="InterPro" id="IPR013159">
    <property type="entry name" value="DnaA_C"/>
</dbReference>
<dbReference type="InterPro" id="IPR013317">
    <property type="entry name" value="DnaA_dom"/>
</dbReference>
<dbReference type="InterPro" id="IPR024633">
    <property type="entry name" value="DnaA_N_dom"/>
</dbReference>
<dbReference type="InterPro" id="IPR038454">
    <property type="entry name" value="DnaA_N_sf"/>
</dbReference>
<dbReference type="InterPro" id="IPR027417">
    <property type="entry name" value="P-loop_NTPase"/>
</dbReference>
<dbReference type="InterPro" id="IPR010921">
    <property type="entry name" value="Trp_repressor/repl_initiator"/>
</dbReference>
<dbReference type="NCBIfam" id="TIGR00362">
    <property type="entry name" value="DnaA"/>
    <property type="match status" value="1"/>
</dbReference>
<dbReference type="PANTHER" id="PTHR30050">
    <property type="entry name" value="CHROMOSOMAL REPLICATION INITIATOR PROTEIN DNAA"/>
    <property type="match status" value="1"/>
</dbReference>
<dbReference type="PANTHER" id="PTHR30050:SF2">
    <property type="entry name" value="CHROMOSOMAL REPLICATION INITIATOR PROTEIN DNAA"/>
    <property type="match status" value="1"/>
</dbReference>
<dbReference type="Pfam" id="PF00308">
    <property type="entry name" value="Bac_DnaA"/>
    <property type="match status" value="1"/>
</dbReference>
<dbReference type="Pfam" id="PF08299">
    <property type="entry name" value="Bac_DnaA_C"/>
    <property type="match status" value="1"/>
</dbReference>
<dbReference type="Pfam" id="PF11638">
    <property type="entry name" value="DnaA_N"/>
    <property type="match status" value="1"/>
</dbReference>
<dbReference type="PRINTS" id="PR00051">
    <property type="entry name" value="DNAA"/>
</dbReference>
<dbReference type="SMART" id="SM00382">
    <property type="entry name" value="AAA"/>
    <property type="match status" value="1"/>
</dbReference>
<dbReference type="SMART" id="SM00760">
    <property type="entry name" value="Bac_DnaA_C"/>
    <property type="match status" value="1"/>
</dbReference>
<dbReference type="SUPFAM" id="SSF52540">
    <property type="entry name" value="P-loop containing nucleoside triphosphate hydrolases"/>
    <property type="match status" value="1"/>
</dbReference>
<dbReference type="SUPFAM" id="SSF48295">
    <property type="entry name" value="TrpR-like"/>
    <property type="match status" value="1"/>
</dbReference>
<dbReference type="PROSITE" id="PS01008">
    <property type="entry name" value="DNAA"/>
    <property type="match status" value="1"/>
</dbReference>
<name>DNAA1_PARUW</name>
<keyword id="KW-0067">ATP-binding</keyword>
<keyword id="KW-0963">Cytoplasm</keyword>
<keyword id="KW-0235">DNA replication</keyword>
<keyword id="KW-0238">DNA-binding</keyword>
<keyword id="KW-0446">Lipid-binding</keyword>
<keyword id="KW-0547">Nucleotide-binding</keyword>
<keyword id="KW-1185">Reference proteome</keyword>
<proteinExistence type="inferred from homology"/>